<dbReference type="EMBL" id="CP000027">
    <property type="protein sequence ID" value="AAW40170.1"/>
    <property type="molecule type" value="Genomic_DNA"/>
</dbReference>
<dbReference type="RefSeq" id="WP_010936342.1">
    <property type="nucleotide sequence ID" value="NC_002936.3"/>
</dbReference>
<dbReference type="SMR" id="Q3Z8Z0"/>
<dbReference type="FunCoup" id="Q3Z8Z0">
    <property type="interactions" value="266"/>
</dbReference>
<dbReference type="STRING" id="243164.DET0566"/>
<dbReference type="GeneID" id="3230134"/>
<dbReference type="KEGG" id="det:DET0566"/>
<dbReference type="PATRIC" id="fig|243164.10.peg.544"/>
<dbReference type="eggNOG" id="COG0806">
    <property type="taxonomic scope" value="Bacteria"/>
</dbReference>
<dbReference type="HOGENOM" id="CLU_077636_3_2_0"/>
<dbReference type="InParanoid" id="Q3Z8Z0"/>
<dbReference type="Proteomes" id="UP000008289">
    <property type="component" value="Chromosome"/>
</dbReference>
<dbReference type="GO" id="GO:0005737">
    <property type="term" value="C:cytoplasm"/>
    <property type="evidence" value="ECO:0007669"/>
    <property type="project" value="UniProtKB-SubCell"/>
</dbReference>
<dbReference type="GO" id="GO:0005840">
    <property type="term" value="C:ribosome"/>
    <property type="evidence" value="ECO:0007669"/>
    <property type="project" value="InterPro"/>
</dbReference>
<dbReference type="GO" id="GO:0043022">
    <property type="term" value="F:ribosome binding"/>
    <property type="evidence" value="ECO:0007669"/>
    <property type="project" value="InterPro"/>
</dbReference>
<dbReference type="GO" id="GO:0042274">
    <property type="term" value="P:ribosomal small subunit biogenesis"/>
    <property type="evidence" value="ECO:0007669"/>
    <property type="project" value="UniProtKB-UniRule"/>
</dbReference>
<dbReference type="GO" id="GO:0006364">
    <property type="term" value="P:rRNA processing"/>
    <property type="evidence" value="ECO:0007669"/>
    <property type="project" value="UniProtKB-UniRule"/>
</dbReference>
<dbReference type="Gene3D" id="2.30.30.240">
    <property type="entry name" value="PRC-barrel domain"/>
    <property type="match status" value="1"/>
</dbReference>
<dbReference type="Gene3D" id="2.40.30.60">
    <property type="entry name" value="RimM"/>
    <property type="match status" value="1"/>
</dbReference>
<dbReference type="HAMAP" id="MF_00014">
    <property type="entry name" value="Ribosome_mat_RimM"/>
    <property type="match status" value="1"/>
</dbReference>
<dbReference type="InterPro" id="IPR001611">
    <property type="entry name" value="Leu-rich_rpt"/>
</dbReference>
<dbReference type="InterPro" id="IPR011033">
    <property type="entry name" value="PRC_barrel-like_sf"/>
</dbReference>
<dbReference type="InterPro" id="IPR056792">
    <property type="entry name" value="PRC_RimM"/>
</dbReference>
<dbReference type="InterPro" id="IPR011961">
    <property type="entry name" value="RimM"/>
</dbReference>
<dbReference type="InterPro" id="IPR002676">
    <property type="entry name" value="RimM_N"/>
</dbReference>
<dbReference type="InterPro" id="IPR036976">
    <property type="entry name" value="RimM_N_sf"/>
</dbReference>
<dbReference type="InterPro" id="IPR009000">
    <property type="entry name" value="Transl_B-barrel_sf"/>
</dbReference>
<dbReference type="NCBIfam" id="TIGR02273">
    <property type="entry name" value="16S_RimM"/>
    <property type="match status" value="1"/>
</dbReference>
<dbReference type="PANTHER" id="PTHR33692">
    <property type="entry name" value="RIBOSOME MATURATION FACTOR RIMM"/>
    <property type="match status" value="1"/>
</dbReference>
<dbReference type="PANTHER" id="PTHR33692:SF1">
    <property type="entry name" value="RIBOSOME MATURATION FACTOR RIMM"/>
    <property type="match status" value="1"/>
</dbReference>
<dbReference type="Pfam" id="PF24986">
    <property type="entry name" value="PRC_RimM"/>
    <property type="match status" value="1"/>
</dbReference>
<dbReference type="Pfam" id="PF01782">
    <property type="entry name" value="RimM"/>
    <property type="match status" value="1"/>
</dbReference>
<dbReference type="SUPFAM" id="SSF50346">
    <property type="entry name" value="PRC-barrel domain"/>
    <property type="match status" value="1"/>
</dbReference>
<dbReference type="SUPFAM" id="SSF50447">
    <property type="entry name" value="Translation proteins"/>
    <property type="match status" value="1"/>
</dbReference>
<dbReference type="PROSITE" id="PS51450">
    <property type="entry name" value="LRR"/>
    <property type="match status" value="1"/>
</dbReference>
<organism>
    <name type="scientific">Dehalococcoides mccartyi (strain ATCC BAA-2266 / KCTC 15142 / 195)</name>
    <name type="common">Dehalococcoides ethenogenes (strain 195)</name>
    <dbReference type="NCBI Taxonomy" id="243164"/>
    <lineage>
        <taxon>Bacteria</taxon>
        <taxon>Bacillati</taxon>
        <taxon>Chloroflexota</taxon>
        <taxon>Dehalococcoidia</taxon>
        <taxon>Dehalococcoidales</taxon>
        <taxon>Dehalococcoidaceae</taxon>
        <taxon>Dehalococcoides</taxon>
    </lineage>
</organism>
<reference key="1">
    <citation type="journal article" date="2005" name="Science">
        <title>Genome sequence of the PCE-dechlorinating bacterium Dehalococcoides ethenogenes.</title>
        <authorList>
            <person name="Seshadri R."/>
            <person name="Adrian L."/>
            <person name="Fouts D.E."/>
            <person name="Eisen J.A."/>
            <person name="Phillippy A.M."/>
            <person name="Methe B.A."/>
            <person name="Ward N.L."/>
            <person name="Nelson W.C."/>
            <person name="DeBoy R.T."/>
            <person name="Khouri H.M."/>
            <person name="Kolonay J.F."/>
            <person name="Dodson R.J."/>
            <person name="Daugherty S.C."/>
            <person name="Brinkac L.M."/>
            <person name="Sullivan S.A."/>
            <person name="Madupu R."/>
            <person name="Nelson K.E."/>
            <person name="Kang K.H."/>
            <person name="Impraim M."/>
            <person name="Tran K."/>
            <person name="Robinson J.M."/>
            <person name="Forberger H.A."/>
            <person name="Fraser C.M."/>
            <person name="Zinder S.H."/>
            <person name="Heidelberg J.F."/>
        </authorList>
    </citation>
    <scope>NUCLEOTIDE SEQUENCE [LARGE SCALE GENOMIC DNA]</scope>
    <source>
        <strain>ATCC BAA-2266 / KCTC 15142 / 195</strain>
    </source>
</reference>
<keyword id="KW-0143">Chaperone</keyword>
<keyword id="KW-0963">Cytoplasm</keyword>
<keyword id="KW-0690">Ribosome biogenesis</keyword>
<keyword id="KW-0698">rRNA processing</keyword>
<sequence length="167" mass="18228">MTQEEEYILIGKVLGVWGINGGLKIEVLTDFPERFDAGNELLIGRAPYTISQTSWQKAQVIVHLSEITGIDAAEELSGAQVEIPAAALKKLPKGVYYDFQLIGLEVTDLSGNRIGQIKEILHMPSNDIYVSSYGAKEALIPAVKDVVKEINLQKGQVIIDPIPGLLD</sequence>
<feature type="chain" id="PRO_0000244124" description="Ribosome maturation factor RimM">
    <location>
        <begin position="1"/>
        <end position="167"/>
    </location>
</feature>
<feature type="domain" description="PRC barrel" evidence="1">
    <location>
        <begin position="93"/>
        <end position="165"/>
    </location>
</feature>
<evidence type="ECO:0000255" key="1">
    <source>
        <dbReference type="HAMAP-Rule" id="MF_00014"/>
    </source>
</evidence>
<gene>
    <name evidence="1" type="primary">rimM</name>
    <name type="ordered locus">DET0566</name>
</gene>
<name>RIMM_DEHM1</name>
<proteinExistence type="inferred from homology"/>
<comment type="function">
    <text evidence="1">An accessory protein needed during the final step in the assembly of 30S ribosomal subunit, possibly for assembly of the head region. Essential for efficient processing of 16S rRNA. May be needed both before and after RbfA during the maturation of 16S rRNA. It has affinity for free ribosomal 30S subunits but not for 70S ribosomes.</text>
</comment>
<comment type="subunit">
    <text evidence="1">Binds ribosomal protein uS19.</text>
</comment>
<comment type="subcellular location">
    <subcellularLocation>
        <location evidence="1">Cytoplasm</location>
    </subcellularLocation>
</comment>
<comment type="domain">
    <text evidence="1">The PRC barrel domain binds ribosomal protein uS19.</text>
</comment>
<comment type="similarity">
    <text evidence="1">Belongs to the RimM family.</text>
</comment>
<accession>Q3Z8Z0</accession>
<protein>
    <recommendedName>
        <fullName evidence="1">Ribosome maturation factor RimM</fullName>
    </recommendedName>
</protein>